<comment type="function">
    <text evidence="1">Catalyzes the isomerization between 2-isopropylmalate and 3-isopropylmalate, via the formation of 2-isopropylmaleate.</text>
</comment>
<comment type="catalytic activity">
    <reaction evidence="1">
        <text>(2R,3S)-3-isopropylmalate = (2S)-2-isopropylmalate</text>
        <dbReference type="Rhea" id="RHEA:32287"/>
        <dbReference type="ChEBI" id="CHEBI:1178"/>
        <dbReference type="ChEBI" id="CHEBI:35121"/>
        <dbReference type="EC" id="4.2.1.33"/>
    </reaction>
</comment>
<comment type="cofactor">
    <cofactor evidence="1">
        <name>[4Fe-4S] cluster</name>
        <dbReference type="ChEBI" id="CHEBI:49883"/>
    </cofactor>
    <text evidence="1">Binds 1 [4Fe-4S] cluster per subunit.</text>
</comment>
<comment type="pathway">
    <text evidence="1">Amino-acid biosynthesis; L-leucine biosynthesis; L-leucine from 3-methyl-2-oxobutanoate: step 2/4.</text>
</comment>
<comment type="subunit">
    <text evidence="1">Heterodimer of LeuC and LeuD.</text>
</comment>
<comment type="similarity">
    <text evidence="1">Belongs to the aconitase/IPM isomerase family. LeuC type 2 subfamily.</text>
</comment>
<name>LEUC_HALOH</name>
<organism>
    <name type="scientific">Halothermothrix orenii (strain H 168 / OCM 544 / DSM 9562)</name>
    <dbReference type="NCBI Taxonomy" id="373903"/>
    <lineage>
        <taxon>Bacteria</taxon>
        <taxon>Bacillati</taxon>
        <taxon>Bacillota</taxon>
        <taxon>Clostridia</taxon>
        <taxon>Halanaerobiales</taxon>
        <taxon>Halothermotrichaceae</taxon>
        <taxon>Halothermothrix</taxon>
    </lineage>
</organism>
<dbReference type="EC" id="4.2.1.33" evidence="1"/>
<dbReference type="EMBL" id="CP001098">
    <property type="protein sequence ID" value="ACL69841.1"/>
    <property type="molecule type" value="Genomic_DNA"/>
</dbReference>
<dbReference type="RefSeq" id="WP_012636026.1">
    <property type="nucleotide sequence ID" value="NC_011899.1"/>
</dbReference>
<dbReference type="SMR" id="B8CX22"/>
<dbReference type="STRING" id="373903.Hore_10870"/>
<dbReference type="KEGG" id="hor:Hore_10870"/>
<dbReference type="eggNOG" id="COG0065">
    <property type="taxonomic scope" value="Bacteria"/>
</dbReference>
<dbReference type="HOGENOM" id="CLU_006714_3_4_9"/>
<dbReference type="OrthoDB" id="9802769at2"/>
<dbReference type="UniPathway" id="UPA00048">
    <property type="reaction ID" value="UER00071"/>
</dbReference>
<dbReference type="Proteomes" id="UP000000719">
    <property type="component" value="Chromosome"/>
</dbReference>
<dbReference type="GO" id="GO:0003861">
    <property type="term" value="F:3-isopropylmalate dehydratase activity"/>
    <property type="evidence" value="ECO:0007669"/>
    <property type="project" value="UniProtKB-UniRule"/>
</dbReference>
<dbReference type="GO" id="GO:0051539">
    <property type="term" value="F:4 iron, 4 sulfur cluster binding"/>
    <property type="evidence" value="ECO:0007669"/>
    <property type="project" value="UniProtKB-KW"/>
</dbReference>
<dbReference type="GO" id="GO:0046872">
    <property type="term" value="F:metal ion binding"/>
    <property type="evidence" value="ECO:0007669"/>
    <property type="project" value="UniProtKB-KW"/>
</dbReference>
<dbReference type="GO" id="GO:0009098">
    <property type="term" value="P:L-leucine biosynthetic process"/>
    <property type="evidence" value="ECO:0007669"/>
    <property type="project" value="UniProtKB-UniRule"/>
</dbReference>
<dbReference type="CDD" id="cd01583">
    <property type="entry name" value="IPMI"/>
    <property type="match status" value="1"/>
</dbReference>
<dbReference type="Gene3D" id="3.30.499.10">
    <property type="entry name" value="Aconitase, domain 3"/>
    <property type="match status" value="2"/>
</dbReference>
<dbReference type="HAMAP" id="MF_01027">
    <property type="entry name" value="LeuC_type2"/>
    <property type="match status" value="1"/>
</dbReference>
<dbReference type="InterPro" id="IPR015931">
    <property type="entry name" value="Acnase/IPM_dHydase_lsu_aba_1/3"/>
</dbReference>
<dbReference type="InterPro" id="IPR001030">
    <property type="entry name" value="Acoase/IPM_deHydtase_lsu_aba"/>
</dbReference>
<dbReference type="InterPro" id="IPR018136">
    <property type="entry name" value="Aconitase_4Fe-4S_BS"/>
</dbReference>
<dbReference type="InterPro" id="IPR036008">
    <property type="entry name" value="Aconitase_4Fe-4S_dom"/>
</dbReference>
<dbReference type="InterPro" id="IPR011826">
    <property type="entry name" value="HAcnase/IPMdehydase_lsu_prok"/>
</dbReference>
<dbReference type="InterPro" id="IPR006251">
    <property type="entry name" value="Homoacnase/IPMdehydase_lsu"/>
</dbReference>
<dbReference type="InterPro" id="IPR050067">
    <property type="entry name" value="IPM_dehydratase_rel_enz"/>
</dbReference>
<dbReference type="InterPro" id="IPR033941">
    <property type="entry name" value="IPMI_cat"/>
</dbReference>
<dbReference type="InterPro" id="IPR011823">
    <property type="entry name" value="IsopropMal_deHydtase_lsu_bac"/>
</dbReference>
<dbReference type="NCBIfam" id="TIGR01343">
    <property type="entry name" value="hacA_fam"/>
    <property type="match status" value="1"/>
</dbReference>
<dbReference type="NCBIfam" id="TIGR02086">
    <property type="entry name" value="IPMI_arch"/>
    <property type="match status" value="1"/>
</dbReference>
<dbReference type="NCBIfam" id="TIGR02083">
    <property type="entry name" value="LEU2"/>
    <property type="match status" value="1"/>
</dbReference>
<dbReference type="NCBIfam" id="NF001614">
    <property type="entry name" value="PRK00402.1"/>
    <property type="match status" value="1"/>
</dbReference>
<dbReference type="PANTHER" id="PTHR43822:SF16">
    <property type="entry name" value="3-ISOPROPYLMALATE DEHYDRATASE LARGE SUBUNIT 2"/>
    <property type="match status" value="1"/>
</dbReference>
<dbReference type="PANTHER" id="PTHR43822">
    <property type="entry name" value="HOMOACONITASE, MITOCHONDRIAL-RELATED"/>
    <property type="match status" value="1"/>
</dbReference>
<dbReference type="Pfam" id="PF00330">
    <property type="entry name" value="Aconitase"/>
    <property type="match status" value="2"/>
</dbReference>
<dbReference type="PRINTS" id="PR00415">
    <property type="entry name" value="ACONITASE"/>
</dbReference>
<dbReference type="SUPFAM" id="SSF53732">
    <property type="entry name" value="Aconitase iron-sulfur domain"/>
    <property type="match status" value="1"/>
</dbReference>
<dbReference type="PROSITE" id="PS00450">
    <property type="entry name" value="ACONITASE_1"/>
    <property type="match status" value="1"/>
</dbReference>
<dbReference type="PROSITE" id="PS01244">
    <property type="entry name" value="ACONITASE_2"/>
    <property type="match status" value="1"/>
</dbReference>
<reference key="1">
    <citation type="journal article" date="2009" name="PLoS ONE">
        <title>Genome analysis of the anaerobic thermohalophilic bacterium Halothermothrix orenii.</title>
        <authorList>
            <person name="Mavromatis K."/>
            <person name="Ivanova N."/>
            <person name="Anderson I."/>
            <person name="Lykidis A."/>
            <person name="Hooper S.D."/>
            <person name="Sun H."/>
            <person name="Kunin V."/>
            <person name="Lapidus A."/>
            <person name="Hugenholtz P."/>
            <person name="Patel B."/>
            <person name="Kyrpides N.C."/>
        </authorList>
    </citation>
    <scope>NUCLEOTIDE SEQUENCE [LARGE SCALE GENOMIC DNA]</scope>
    <source>
        <strain>H 168 / OCM 544 / DSM 9562</strain>
    </source>
</reference>
<evidence type="ECO:0000255" key="1">
    <source>
        <dbReference type="HAMAP-Rule" id="MF_01027"/>
    </source>
</evidence>
<gene>
    <name evidence="1" type="primary">leuC</name>
    <name type="ordered locus">Hore_10870</name>
</gene>
<accession>B8CX22</accession>
<sequence>MGMTMIEKIIAAHTNRDKVKPGDIVNARIDFVLGNDVTTPVAVKEFNKIGIDEVFDQDRIAIVPDHFTPNKDIKSAEQCKFIREFARDKGIHNYFEIGEMGIEHCLLPEKGLALPGEIIIGADSHTCTYGALGAFATGVGSTDMAAAMATGYTWFKVPSTIQFVYNGELKPWVSGKDLILYTIGDIGVDGALYRAMEFTGETIENLSMDNRMTISNMAIEAGGKCGLIAPDEKTFKYLENRAQRDYTPCYSDDDAEYEKVIEYDVSDIEPQVAFPHLPENTRPISEEGDIKIDQAVIGSCTNGRMEDLRIAAGILKEKQVHHDVRCIVIPGTQDIYKQALKEGLIEIFIEAGAAVSTPTCGPCLGGHMGILARGEKAIATTNRNFVGRMGHPESEVYLANPAVAAASAIKGYIAHPEEVL</sequence>
<protein>
    <recommendedName>
        <fullName evidence="1">3-isopropylmalate dehydratase large subunit</fullName>
        <ecNumber evidence="1">4.2.1.33</ecNumber>
    </recommendedName>
    <alternativeName>
        <fullName evidence="1">Alpha-IPM isomerase</fullName>
        <shortName evidence="1">IPMI</shortName>
    </alternativeName>
    <alternativeName>
        <fullName evidence="1">Isopropylmalate isomerase</fullName>
    </alternativeName>
</protein>
<feature type="chain" id="PRO_1000149379" description="3-isopropylmalate dehydratase large subunit">
    <location>
        <begin position="1"/>
        <end position="420"/>
    </location>
</feature>
<feature type="binding site" evidence="1">
    <location>
        <position position="300"/>
    </location>
    <ligand>
        <name>[4Fe-4S] cluster</name>
        <dbReference type="ChEBI" id="CHEBI:49883"/>
    </ligand>
</feature>
<feature type="binding site" evidence="1">
    <location>
        <position position="360"/>
    </location>
    <ligand>
        <name>[4Fe-4S] cluster</name>
        <dbReference type="ChEBI" id="CHEBI:49883"/>
    </ligand>
</feature>
<feature type="binding site" evidence="1">
    <location>
        <position position="363"/>
    </location>
    <ligand>
        <name>[4Fe-4S] cluster</name>
        <dbReference type="ChEBI" id="CHEBI:49883"/>
    </ligand>
</feature>
<keyword id="KW-0004">4Fe-4S</keyword>
<keyword id="KW-0028">Amino-acid biosynthesis</keyword>
<keyword id="KW-0100">Branched-chain amino acid biosynthesis</keyword>
<keyword id="KW-0408">Iron</keyword>
<keyword id="KW-0411">Iron-sulfur</keyword>
<keyword id="KW-0432">Leucine biosynthesis</keyword>
<keyword id="KW-0456">Lyase</keyword>
<keyword id="KW-0479">Metal-binding</keyword>
<keyword id="KW-1185">Reference proteome</keyword>
<proteinExistence type="inferred from homology"/>